<organism>
    <name type="scientific">Saccharomyces cerevisiae (strain ATCC 204508 / S288c)</name>
    <name type="common">Baker's yeast</name>
    <dbReference type="NCBI Taxonomy" id="559292"/>
    <lineage>
        <taxon>Eukaryota</taxon>
        <taxon>Fungi</taxon>
        <taxon>Dikarya</taxon>
        <taxon>Ascomycota</taxon>
        <taxon>Saccharomycotina</taxon>
        <taxon>Saccharomycetes</taxon>
        <taxon>Saccharomycetales</taxon>
        <taxon>Saccharomycetaceae</taxon>
        <taxon>Saccharomyces</taxon>
    </lineage>
</organism>
<accession>Q08281</accession>
<accession>D6W1T1</accession>
<accession>Q92271</accession>
<feature type="chain" id="PRO_0000223528" description="Restriction of telomere capping protein 1">
    <location>
        <begin position="1"/>
        <end position="1341"/>
    </location>
</feature>
<feature type="repeat" description="WD 1">
    <location>
        <begin position="207"/>
        <end position="248"/>
    </location>
</feature>
<feature type="repeat" description="WD 2">
    <location>
        <begin position="256"/>
        <end position="296"/>
    </location>
</feature>
<feature type="repeat" description="WD 3">
    <location>
        <begin position="305"/>
        <end position="342"/>
    </location>
</feature>
<feature type="repeat" description="WD 4">
    <location>
        <begin position="367"/>
        <end position="406"/>
    </location>
</feature>
<feature type="repeat" description="WD 5">
    <location>
        <begin position="439"/>
        <end position="486"/>
    </location>
</feature>
<feature type="repeat" description="WD 6">
    <location>
        <begin position="489"/>
        <end position="527"/>
    </location>
</feature>
<feature type="repeat" description="WD 7">
    <location>
        <begin position="843"/>
        <end position="883"/>
    </location>
</feature>
<feature type="repeat" description="WD 8">
    <location>
        <begin position="1129"/>
        <end position="1169"/>
    </location>
</feature>
<feature type="repeat" description="WD 9">
    <location>
        <begin position="1216"/>
        <end position="1255"/>
    </location>
</feature>
<feature type="zinc finger region" description="RING-type; degenerate" evidence="1">
    <location>
        <begin position="1293"/>
        <end position="1335"/>
    </location>
</feature>
<feature type="region of interest" description="Disordered" evidence="2">
    <location>
        <begin position="1"/>
        <end position="39"/>
    </location>
</feature>
<feature type="region of interest" description="Disordered" evidence="2">
    <location>
        <begin position="559"/>
        <end position="593"/>
    </location>
</feature>
<feature type="region of interest" description="Disordered" evidence="2">
    <location>
        <begin position="600"/>
        <end position="619"/>
    </location>
</feature>
<feature type="region of interest" description="Disordered" evidence="2">
    <location>
        <begin position="630"/>
        <end position="651"/>
    </location>
</feature>
<feature type="region of interest" description="Disordered" evidence="2">
    <location>
        <begin position="736"/>
        <end position="765"/>
    </location>
</feature>
<feature type="region of interest" description="Disordered" evidence="2">
    <location>
        <begin position="789"/>
        <end position="830"/>
    </location>
</feature>
<feature type="region of interest" description="Disordered" evidence="2">
    <location>
        <begin position="941"/>
        <end position="962"/>
    </location>
</feature>
<feature type="region of interest" description="Disordered" evidence="2">
    <location>
        <begin position="1013"/>
        <end position="1043"/>
    </location>
</feature>
<feature type="compositionally biased region" description="Low complexity" evidence="2">
    <location>
        <begin position="630"/>
        <end position="644"/>
    </location>
</feature>
<feature type="compositionally biased region" description="Acidic residues" evidence="2">
    <location>
        <begin position="753"/>
        <end position="765"/>
    </location>
</feature>
<feature type="compositionally biased region" description="Low complexity" evidence="2">
    <location>
        <begin position="814"/>
        <end position="823"/>
    </location>
</feature>
<feature type="compositionally biased region" description="Basic and acidic residues" evidence="2">
    <location>
        <begin position="951"/>
        <end position="962"/>
    </location>
</feature>
<feature type="compositionally biased region" description="Basic and acidic residues" evidence="2">
    <location>
        <begin position="1015"/>
        <end position="1027"/>
    </location>
</feature>
<feature type="modified residue" description="Phosphoserine" evidence="10 11 12">
    <location>
        <position position="1036"/>
    </location>
</feature>
<feature type="modified residue" description="Phosphoserine" evidence="11 12">
    <location>
        <position position="1080"/>
    </location>
</feature>
<feature type="modified residue" description="Phosphoserine" evidence="11">
    <location>
        <position position="1087"/>
    </location>
</feature>
<feature type="modified residue" description="Phosphoserine" evidence="11 12">
    <location>
        <position position="1089"/>
    </location>
</feature>
<feature type="modified residue" description="Phosphoserine" evidence="10 11 12">
    <location>
        <position position="1123"/>
    </location>
</feature>
<feature type="modified residue" description="Phosphoserine" evidence="11">
    <location>
        <position position="1133"/>
    </location>
</feature>
<feature type="sequence conflict" description="In Ref. 1; CAA64732 and 2; CAA99159." evidence="9" ref="1 2">
    <original>C</original>
    <variation>S</variation>
    <location>
        <position position="393"/>
    </location>
</feature>
<feature type="sequence conflict" description="In Ref. 1; CAA64732 and 2; CAA99159." evidence="9" ref="1 2">
    <original>D</original>
    <variation>G</variation>
    <location>
        <position position="548"/>
    </location>
</feature>
<feature type="sequence conflict" description="In Ref. 1; CAA64732." evidence="9" ref="1">
    <original>D</original>
    <variation>DV</variation>
    <location>
        <position position="1222"/>
    </location>
</feature>
<feature type="strand" evidence="13">
    <location>
        <begin position="143"/>
        <end position="146"/>
    </location>
</feature>
<feature type="strand" evidence="13">
    <location>
        <begin position="154"/>
        <end position="158"/>
    </location>
</feature>
<feature type="strand" evidence="13">
    <location>
        <begin position="164"/>
        <end position="169"/>
    </location>
</feature>
<feature type="turn" evidence="13">
    <location>
        <begin position="170"/>
        <end position="173"/>
    </location>
</feature>
<feature type="strand" evidence="13">
    <location>
        <begin position="174"/>
        <end position="180"/>
    </location>
</feature>
<feature type="strand" evidence="13">
    <location>
        <begin position="225"/>
        <end position="228"/>
    </location>
</feature>
<feature type="strand" evidence="13">
    <location>
        <begin position="230"/>
        <end position="242"/>
    </location>
</feature>
<feature type="strand" evidence="13">
    <location>
        <begin position="244"/>
        <end position="247"/>
    </location>
</feature>
<feature type="strand" evidence="13">
    <location>
        <begin position="261"/>
        <end position="266"/>
    </location>
</feature>
<feature type="strand" evidence="13">
    <location>
        <begin position="274"/>
        <end position="278"/>
    </location>
</feature>
<feature type="strand" evidence="13">
    <location>
        <begin position="281"/>
        <end position="285"/>
    </location>
</feature>
<feature type="strand" evidence="13">
    <location>
        <begin position="300"/>
        <end position="304"/>
    </location>
</feature>
<feature type="strand" evidence="13">
    <location>
        <begin position="310"/>
        <end position="315"/>
    </location>
</feature>
<feature type="strand" evidence="13">
    <location>
        <begin position="341"/>
        <end position="345"/>
    </location>
</feature>
<feature type="strand" evidence="13">
    <location>
        <begin position="348"/>
        <end position="352"/>
    </location>
</feature>
<feature type="strand" evidence="13">
    <location>
        <begin position="355"/>
        <end position="357"/>
    </location>
</feature>
<feature type="strand" evidence="13">
    <location>
        <begin position="362"/>
        <end position="366"/>
    </location>
</feature>
<feature type="strand" evidence="13">
    <location>
        <begin position="372"/>
        <end position="377"/>
    </location>
</feature>
<feature type="strand" evidence="13">
    <location>
        <begin position="379"/>
        <end position="388"/>
    </location>
</feature>
<feature type="strand" evidence="13">
    <location>
        <begin position="392"/>
        <end position="397"/>
    </location>
</feature>
<feature type="strand" evidence="13">
    <location>
        <begin position="437"/>
        <end position="439"/>
    </location>
</feature>
<feature type="strand" evidence="13">
    <location>
        <begin position="444"/>
        <end position="449"/>
    </location>
</feature>
<feature type="strand" evidence="13">
    <location>
        <begin position="461"/>
        <end position="466"/>
    </location>
</feature>
<feature type="strand" evidence="13">
    <location>
        <begin position="468"/>
        <end position="470"/>
    </location>
</feature>
<feature type="strand" evidence="13">
    <location>
        <begin position="473"/>
        <end position="477"/>
    </location>
</feature>
<feature type="strand" evidence="13">
    <location>
        <begin position="481"/>
        <end position="483"/>
    </location>
</feature>
<feature type="strand" evidence="13">
    <location>
        <begin position="485"/>
        <end position="488"/>
    </location>
</feature>
<feature type="strand" evidence="13">
    <location>
        <begin position="494"/>
        <end position="499"/>
    </location>
</feature>
<feature type="strand" evidence="13">
    <location>
        <begin position="501"/>
        <end position="509"/>
    </location>
</feature>
<feature type="strand" evidence="13">
    <location>
        <begin position="515"/>
        <end position="518"/>
    </location>
</feature>
<feature type="helix" evidence="13">
    <location>
        <begin position="519"/>
        <end position="521"/>
    </location>
</feature>
<feature type="helix" evidence="13">
    <location>
        <begin position="525"/>
        <end position="528"/>
    </location>
</feature>
<feature type="strand" evidence="13">
    <location>
        <begin position="538"/>
        <end position="540"/>
    </location>
</feature>
<feature type="strand" evidence="13">
    <location>
        <begin position="542"/>
        <end position="544"/>
    </location>
</feature>
<feature type="helix" evidence="13">
    <location>
        <begin position="665"/>
        <end position="677"/>
    </location>
</feature>
<feature type="helix" evidence="13">
    <location>
        <begin position="696"/>
        <end position="705"/>
    </location>
</feature>
<feature type="helix" evidence="13">
    <location>
        <begin position="837"/>
        <end position="863"/>
    </location>
</feature>
<feature type="helix" evidence="13">
    <location>
        <begin position="867"/>
        <end position="889"/>
    </location>
</feature>
<feature type="helix" evidence="13">
    <location>
        <begin position="1161"/>
        <end position="1175"/>
    </location>
</feature>
<feature type="helix" evidence="13">
    <location>
        <begin position="1178"/>
        <end position="1187"/>
    </location>
</feature>
<feature type="strand" evidence="13">
    <location>
        <begin position="1189"/>
        <end position="1192"/>
    </location>
</feature>
<feature type="helix" evidence="13">
    <location>
        <begin position="1197"/>
        <end position="1213"/>
    </location>
</feature>
<feature type="helix" evidence="13">
    <location>
        <begin position="1218"/>
        <end position="1225"/>
    </location>
</feature>
<feature type="strand" evidence="13">
    <location>
        <begin position="1235"/>
        <end position="1237"/>
    </location>
</feature>
<feature type="strand" evidence="13">
    <location>
        <begin position="1239"/>
        <end position="1241"/>
    </location>
</feature>
<feature type="strand" evidence="13">
    <location>
        <begin position="1247"/>
        <end position="1249"/>
    </location>
</feature>
<feature type="helix" evidence="13">
    <location>
        <begin position="1256"/>
        <end position="1268"/>
    </location>
</feature>
<feature type="strand" evidence="13">
    <location>
        <begin position="1272"/>
        <end position="1274"/>
    </location>
</feature>
<feature type="helix" evidence="13">
    <location>
        <begin position="1275"/>
        <end position="1277"/>
    </location>
</feature>
<feature type="strand" evidence="13">
    <location>
        <begin position="1280"/>
        <end position="1282"/>
    </location>
</feature>
<feature type="strand" evidence="13">
    <location>
        <begin position="1284"/>
        <end position="1286"/>
    </location>
</feature>
<feature type="turn" evidence="13">
    <location>
        <begin position="1294"/>
        <end position="1296"/>
    </location>
</feature>
<feature type="turn" evidence="13">
    <location>
        <begin position="1308"/>
        <end position="1311"/>
    </location>
</feature>
<feature type="helix" evidence="13">
    <location>
        <begin position="1316"/>
        <end position="1324"/>
    </location>
</feature>
<comment type="function">
    <text evidence="7 8">Component of the SEA complex which coats the vacuolar membrane and is involved in intracellular trafficking, autophagy, response to nitrogen starvation, and amino acid biogenesis. May be involved in a process influencing telomere capping.</text>
</comment>
<comment type="subunit">
    <text evidence="6 8">Component of the SEA complex composed of at least IML1/SEA1, RTC1/SEA2, MTC5/SEA3, NPR2, NPR3, SEA4, SEC13 and SEH1. Interacts with ribosomes.</text>
</comment>
<comment type="subcellular location">
    <subcellularLocation>
        <location evidence="3 8">Vacuole membrane</location>
        <topology evidence="3 8">Peripheral membrane protein</topology>
    </subcellularLocation>
</comment>
<comment type="disruption phenotype">
    <text evidence="5">Leads to short telomeres.</text>
</comment>
<comment type="miscellaneous">
    <text evidence="4">Present with 606 molecules/cell in log phase SD medium.</text>
</comment>
<comment type="similarity">
    <text evidence="9">Belongs to the WD repeat RTC1 family.</text>
</comment>
<proteinExistence type="evidence at protein level"/>
<reference key="1">
    <citation type="journal article" date="1996" name="Yeast">
        <title>Sequence analysis of a 12 801 bp fragment of the left arm of yeast chromosome XV containing a putative 6-phosphofructo-2-kinase gene, a gene for a possible glycophospholipid-anchored surface protein and six other open reading frames.</title>
        <authorList>
            <person name="Aldea M."/>
            <person name="Piedrafita L."/>
            <person name="Casas C."/>
            <person name="Casamayor A."/>
            <person name="Khalid H."/>
            <person name="Balcells L."/>
            <person name="Arino J."/>
            <person name="Herrero E."/>
        </authorList>
    </citation>
    <scope>NUCLEOTIDE SEQUENCE [GENOMIC DNA]</scope>
    <source>
        <strain>ATCC 96604 / S288c / FY1679</strain>
    </source>
</reference>
<reference key="2">
    <citation type="journal article" date="1997" name="Nature">
        <title>The nucleotide sequence of Saccharomyces cerevisiae chromosome XV.</title>
        <authorList>
            <person name="Dujon B."/>
            <person name="Albermann K."/>
            <person name="Aldea M."/>
            <person name="Alexandraki D."/>
            <person name="Ansorge W."/>
            <person name="Arino J."/>
            <person name="Benes V."/>
            <person name="Bohn C."/>
            <person name="Bolotin-Fukuhara M."/>
            <person name="Bordonne R."/>
            <person name="Boyer J."/>
            <person name="Camasses A."/>
            <person name="Casamayor A."/>
            <person name="Casas C."/>
            <person name="Cheret G."/>
            <person name="Cziepluch C."/>
            <person name="Daignan-Fornier B."/>
            <person name="Dang V.-D."/>
            <person name="de Haan M."/>
            <person name="Delius H."/>
            <person name="Durand P."/>
            <person name="Fairhead C."/>
            <person name="Feldmann H."/>
            <person name="Gaillon L."/>
            <person name="Galisson F."/>
            <person name="Gamo F.-J."/>
            <person name="Gancedo C."/>
            <person name="Goffeau A."/>
            <person name="Goulding S.E."/>
            <person name="Grivell L.A."/>
            <person name="Habbig B."/>
            <person name="Hand N.J."/>
            <person name="Hani J."/>
            <person name="Hattenhorst U."/>
            <person name="Hebling U."/>
            <person name="Hernando Y."/>
            <person name="Herrero E."/>
            <person name="Heumann K."/>
            <person name="Hiesel R."/>
            <person name="Hilger F."/>
            <person name="Hofmann B."/>
            <person name="Hollenberg C.P."/>
            <person name="Hughes B."/>
            <person name="Jauniaux J.-C."/>
            <person name="Kalogeropoulos A."/>
            <person name="Katsoulou C."/>
            <person name="Kordes E."/>
            <person name="Lafuente M.J."/>
            <person name="Landt O."/>
            <person name="Louis E.J."/>
            <person name="Maarse A.C."/>
            <person name="Madania A."/>
            <person name="Mannhaupt G."/>
            <person name="Marck C."/>
            <person name="Martin R.P."/>
            <person name="Mewes H.-W."/>
            <person name="Michaux G."/>
            <person name="Paces V."/>
            <person name="Parle-McDermott A.G."/>
            <person name="Pearson B.M."/>
            <person name="Perrin A."/>
            <person name="Pettersson B."/>
            <person name="Poch O."/>
            <person name="Pohl T.M."/>
            <person name="Poirey R."/>
            <person name="Portetelle D."/>
            <person name="Pujol A."/>
            <person name="Purnelle B."/>
            <person name="Ramezani Rad M."/>
            <person name="Rechmann S."/>
            <person name="Schwager C."/>
            <person name="Schweizer M."/>
            <person name="Sor F."/>
            <person name="Sterky F."/>
            <person name="Tarassov I.A."/>
            <person name="Teodoru C."/>
            <person name="Tettelin H."/>
            <person name="Thierry A."/>
            <person name="Tobiasch E."/>
            <person name="Tzermia M."/>
            <person name="Uhlen M."/>
            <person name="Unseld M."/>
            <person name="Valens M."/>
            <person name="Vandenbol M."/>
            <person name="Vetter I."/>
            <person name="Vlcek C."/>
            <person name="Voet M."/>
            <person name="Volckaert G."/>
            <person name="Voss H."/>
            <person name="Wambutt R."/>
            <person name="Wedler H."/>
            <person name="Wiemann S."/>
            <person name="Winsor B."/>
            <person name="Wolfe K.H."/>
            <person name="Zollner A."/>
            <person name="Zumstein E."/>
            <person name="Kleine K."/>
        </authorList>
    </citation>
    <scope>NUCLEOTIDE SEQUENCE [LARGE SCALE GENOMIC DNA]</scope>
    <source>
        <strain>ATCC 204508 / S288c</strain>
    </source>
</reference>
<reference key="3">
    <citation type="journal article" date="2014" name="G3 (Bethesda)">
        <title>The reference genome sequence of Saccharomyces cerevisiae: Then and now.</title>
        <authorList>
            <person name="Engel S.R."/>
            <person name="Dietrich F.S."/>
            <person name="Fisk D.G."/>
            <person name="Binkley G."/>
            <person name="Balakrishnan R."/>
            <person name="Costanzo M.C."/>
            <person name="Dwight S.S."/>
            <person name="Hitz B.C."/>
            <person name="Karra K."/>
            <person name="Nash R.S."/>
            <person name="Weng S."/>
            <person name="Wong E.D."/>
            <person name="Lloyd P."/>
            <person name="Skrzypek M.S."/>
            <person name="Miyasato S.R."/>
            <person name="Simison M."/>
            <person name="Cherry J.M."/>
        </authorList>
    </citation>
    <scope>GENOME REANNOTATION</scope>
    <scope>SEQUENCE REVISION TO 393 AND 548</scope>
    <source>
        <strain>ATCC 204508 / S288c</strain>
    </source>
</reference>
<reference key="4">
    <citation type="journal article" date="2003" name="Nature">
        <title>Global analysis of protein localization in budding yeast.</title>
        <authorList>
            <person name="Huh W.-K."/>
            <person name="Falvo J.V."/>
            <person name="Gerke L.C."/>
            <person name="Carroll A.S."/>
            <person name="Howson R.W."/>
            <person name="Weissman J.S."/>
            <person name="O'Shea E.K."/>
        </authorList>
    </citation>
    <scope>SUBCELLULAR LOCATION [LARGE SCALE ANALYSIS]</scope>
</reference>
<reference key="5">
    <citation type="journal article" date="2003" name="Nature">
        <title>Global analysis of protein expression in yeast.</title>
        <authorList>
            <person name="Ghaemmaghami S."/>
            <person name="Huh W.-K."/>
            <person name="Bower K."/>
            <person name="Howson R.W."/>
            <person name="Belle A."/>
            <person name="Dephoure N."/>
            <person name="O'Shea E.K."/>
            <person name="Weissman J.S."/>
        </authorList>
    </citation>
    <scope>LEVEL OF PROTEIN EXPRESSION [LARGE SCALE ANALYSIS]</scope>
</reference>
<reference key="6">
    <citation type="journal article" date="2004" name="Proc. Natl. Acad. Sci. U.S.A.">
        <title>A genome-wide screen for Saccharomyces cerevisiae deletion mutants that affect telomere length.</title>
        <authorList>
            <person name="Askree S.H."/>
            <person name="Yehuda T."/>
            <person name="Smolikov S."/>
            <person name="Gurevich R."/>
            <person name="Hawk J."/>
            <person name="Coker C."/>
            <person name="Krauskopf A."/>
            <person name="Kupiec M."/>
            <person name="McEachern M.J."/>
        </authorList>
    </citation>
    <scope>DISRUPTION PHENOTYPE</scope>
</reference>
<reference key="7">
    <citation type="journal article" date="2006" name="Genes Dev.">
        <title>Systematic identification and functional screens of uncharacterized proteins associated with eukaryotic ribosomal complexes.</title>
        <authorList>
            <person name="Fleischer T.C."/>
            <person name="Weaver C.M."/>
            <person name="McAfee K.J."/>
            <person name="Jennings J.L."/>
            <person name="Link A.J."/>
        </authorList>
    </citation>
    <scope>IDENTIFICATION BY MASS SPECTROMETRY</scope>
    <scope>INTERACTION WITH RIBOSOMES</scope>
</reference>
<reference key="8">
    <citation type="journal article" date="2007" name="J. Proteome Res.">
        <title>Large-scale phosphorylation analysis of alpha-factor-arrested Saccharomyces cerevisiae.</title>
        <authorList>
            <person name="Li X."/>
            <person name="Gerber S.A."/>
            <person name="Rudner A.D."/>
            <person name="Beausoleil S.A."/>
            <person name="Haas W."/>
            <person name="Villen J."/>
            <person name="Elias J.E."/>
            <person name="Gygi S.P."/>
        </authorList>
    </citation>
    <scope>PHOSPHORYLATION [LARGE SCALE ANALYSIS] AT SER-1036 AND SER-1123</scope>
    <scope>IDENTIFICATION BY MASS SPECTROMETRY [LARGE SCALE ANALYSIS]</scope>
    <source>
        <strain>ADR376</strain>
    </source>
</reference>
<reference key="9">
    <citation type="journal article" date="2007" name="Proc. Natl. Acad. Sci. U.S.A.">
        <title>Analysis of phosphorylation sites on proteins from Saccharomyces cerevisiae by electron transfer dissociation (ETD) mass spectrometry.</title>
        <authorList>
            <person name="Chi A."/>
            <person name="Huttenhower C."/>
            <person name="Geer L.Y."/>
            <person name="Coon J.J."/>
            <person name="Syka J.E.P."/>
            <person name="Bai D.L."/>
            <person name="Shabanowitz J."/>
            <person name="Burke D.J."/>
            <person name="Troyanskaya O.G."/>
            <person name="Hunt D.F."/>
        </authorList>
    </citation>
    <scope>IDENTIFICATION BY MASS SPECTROMETRY [LARGE SCALE ANALYSIS]</scope>
</reference>
<reference key="10">
    <citation type="journal article" date="2008" name="Genetics">
        <title>A genomewide suppressor and enhancer analysis of cdc13-1 reveals varied cellular processes influencing telomere capping in Saccharomyces cerevisiae.</title>
        <authorList>
            <person name="Addinall S.G."/>
            <person name="Downey M."/>
            <person name="Yu M."/>
            <person name="Zubko M.K."/>
            <person name="Dewar J."/>
            <person name="Leake A."/>
            <person name="Hallinan J."/>
            <person name="Shaw O."/>
            <person name="James K."/>
            <person name="Wilkinson D.J."/>
            <person name="Wipat A."/>
            <person name="Durocher D."/>
            <person name="Lydall D."/>
        </authorList>
    </citation>
    <scope>FUNCTION</scope>
</reference>
<reference key="11">
    <citation type="journal article" date="2008" name="Mol. Cell. Proteomics">
        <title>A multidimensional chromatography technology for in-depth phosphoproteome analysis.</title>
        <authorList>
            <person name="Albuquerque C.P."/>
            <person name="Smolka M.B."/>
            <person name="Payne S.H."/>
            <person name="Bafna V."/>
            <person name="Eng J."/>
            <person name="Zhou H."/>
        </authorList>
    </citation>
    <scope>PHOSPHORYLATION [LARGE SCALE ANALYSIS] AT SER-1036; SER-1080; SER-1087; SER-1089; SER-1123 AND SER-1133</scope>
    <scope>IDENTIFICATION BY MASS SPECTROMETRY [LARGE SCALE ANALYSIS]</scope>
</reference>
<reference key="12">
    <citation type="journal article" date="2009" name="Science">
        <title>Global analysis of Cdk1 substrate phosphorylation sites provides insights into evolution.</title>
        <authorList>
            <person name="Holt L.J."/>
            <person name="Tuch B.B."/>
            <person name="Villen J."/>
            <person name="Johnson A.D."/>
            <person name="Gygi S.P."/>
            <person name="Morgan D.O."/>
        </authorList>
    </citation>
    <scope>PHOSPHORYLATION [LARGE SCALE ANALYSIS] AT SER-1036; SER-1080; SER-1089 AND SER-1123</scope>
    <scope>IDENTIFICATION BY MASS SPECTROMETRY [LARGE SCALE ANALYSIS]</scope>
</reference>
<reference key="13">
    <citation type="journal article" date="2011" name="Mol. Cell. Proteomics">
        <title>A conserved coatomer-related complex containing Sec13 and Seh1 dynamically associates with the vacuole in Saccharomyces cerevisiae.</title>
        <authorList>
            <person name="Dokudovskaya S."/>
            <person name="Waharte F."/>
            <person name="Schlessinger A."/>
            <person name="Pieper U."/>
            <person name="Devos D.P."/>
            <person name="Cristea I.M."/>
            <person name="Williams R."/>
            <person name="Salamero J."/>
            <person name="Chait B.T."/>
            <person name="Sali A."/>
            <person name="Field M.C."/>
            <person name="Rout M.P."/>
            <person name="Dargemont C."/>
        </authorList>
    </citation>
    <scope>SUBCELLULAR LOCATION</scope>
    <scope>IDENTIFICATION IN THE SEA COMPLEX</scope>
    <scope>FUNCTION</scope>
</reference>
<sequence length="1341" mass="149344">MSLSPHVENASIPKGSTPIPKNRNVSSIGKGEFLGSSSSNNSSFRMNHYSNSGQPSVLDSIRRPNLTPTFSYSNGVYMPESHRTSSFNDSYLPYDKNPYAKTTGSMSNKSNMKIKTKKNAINTNTRKSSGLIYTTKVDKELSSIDKVNDPNINGLVCAGKTHLGLYKFSPSDRSIKCVHDFITPNSNTSTRGTTSLLPKLSKRTRQNKFSTIADVKTGFNNYKNCIAVCNNSTAISIYDLNKSSSIDNPLITSLCEHTRSINSFDFNMVESNLIISGGQDSCVKIWDLRSNKSKSSNRSDISINTASDSIRDVKWMPGYNFASKNDQGSSTYGNLKSGYKFASIHDSGYLLKFDLRQPAQYEKKLNAHTGPGLCLNWHPNQEYIATGGRDGKCCLWFVGDNANAAENTVLNYGNSPSLHAPNTSLNNSGSLAFPKLTINTGYPVTKLKFKPAYSSNIYNSLLGISSMGDEAEVRIYSLARKYIPKHVLLSETPSLGLVWWDENLIFNIDKGTRINGWDINKEPTVLENLSKNTTTWRDLDGNGLLSVDQEIGSYEVVEPELQPTSSTTCKKHPGTIKNPKNGNPENQGIIGGIKKGFSHTGLTSFTPERPPTLKAGPTFSTKSLTLASGASSFNSSSASLTSLTPQTENREEIAIEPPCIITLDIPQIFNNIRLTKIAHSRKKNVISESSSMKNSPVEKFKYLARQLKFSYIREHNVSDSADTAYKNDIENIDVVKNATETHGDNTTTTNNNDDGDDDDDDDDDDKIIESHLLKKYNFPENNTWATLMNEKVNNKKSKRNSSSSREFDEKDVRSSISSISASRQSHDRARKIDKNVEAELQEKIQTLVDLISIATHNASVYLSIDDLTNFKIWILIRDSLLWDLKWMTSSQISSDNASNMDANESSDFEAGENLKTGKEFPEEDGAGTSGAESLVEERPQAFRANSDEPSDAEKKPVSKLKEQLKNTEIIPYAQPNEDSDEVLTKLKELQNQRLESRTKMGETVSDDVIIEEDEHEHQEEEQPHDSPTKSAQFHASPIAKSIPILQKREHRKSFIDTFMLHSPNGYNGDTDIGNEDDNISPRFTYNSVSPRSKVSSLQSYATTTSQLETFKKLSSHTAPIIGSPRHAPSRPDSIGREQLSSSLTKKLAKCKKIIADPPWDTKKLIKQLYNQATETGNVVLTVNILFLFQTIYQITEIDIAKDAIAHFLLLLHRYELFGIAADVLKYCPFEDIMGSEGDQSSIRLFCERCGELITNESSKEKLRAEAQQTGNKKIMDKFGYWYCDSCKKKNTSCVLCERPLKKLTMVILPCGHEGHFQCIQEWFLDENEQECPGGCPGVAFI</sequence>
<name>RTC1_YEAST</name>
<protein>
    <recommendedName>
        <fullName>Restriction of telomere capping protein 1</fullName>
    </recommendedName>
    <alternativeName>
        <fullName>SEH-associated protein 2</fullName>
    </alternativeName>
</protein>
<gene>
    <name type="primary">RTC1</name>
    <name type="synonym">SEA2</name>
    <name type="ordered locus">YOL138C</name>
</gene>
<keyword id="KW-0002">3D-structure</keyword>
<keyword id="KW-0472">Membrane</keyword>
<keyword id="KW-0479">Metal-binding</keyword>
<keyword id="KW-0597">Phosphoprotein</keyword>
<keyword id="KW-0653">Protein transport</keyword>
<keyword id="KW-1185">Reference proteome</keyword>
<keyword id="KW-0677">Repeat</keyword>
<keyword id="KW-0813">Transport</keyword>
<keyword id="KW-0926">Vacuole</keyword>
<keyword id="KW-0853">WD repeat</keyword>
<keyword id="KW-0862">Zinc</keyword>
<keyword id="KW-0863">Zinc-finger</keyword>
<dbReference type="EMBL" id="X95465">
    <property type="protein sequence ID" value="CAA64732.1"/>
    <property type="molecule type" value="Genomic_DNA"/>
</dbReference>
<dbReference type="EMBL" id="Z74880">
    <property type="protein sequence ID" value="CAA99159.1"/>
    <property type="molecule type" value="Genomic_DNA"/>
</dbReference>
<dbReference type="EMBL" id="BK006948">
    <property type="protein sequence ID" value="DAA10647.2"/>
    <property type="molecule type" value="Genomic_DNA"/>
</dbReference>
<dbReference type="PIR" id="S66835">
    <property type="entry name" value="S66835"/>
</dbReference>
<dbReference type="RefSeq" id="NP_014503.2">
    <property type="nucleotide sequence ID" value="NM_001183392.2"/>
</dbReference>
<dbReference type="PDB" id="8ADL">
    <property type="method" value="EM"/>
    <property type="resolution" value="2.95 A"/>
    <property type="chains" value="A/I=1-1341"/>
</dbReference>
<dbReference type="PDBsum" id="8ADL"/>
<dbReference type="EMDB" id="EMD-15364"/>
<dbReference type="SMR" id="Q08281"/>
<dbReference type="BioGRID" id="34238">
    <property type="interactions" value="247"/>
</dbReference>
<dbReference type="ComplexPortal" id="CPX-3231">
    <property type="entry name" value="SEA complex"/>
</dbReference>
<dbReference type="FunCoup" id="Q08281">
    <property type="interactions" value="178"/>
</dbReference>
<dbReference type="IntAct" id="Q08281">
    <property type="interactions" value="45"/>
</dbReference>
<dbReference type="MINT" id="Q08281"/>
<dbReference type="STRING" id="4932.YOL138C"/>
<dbReference type="iPTMnet" id="Q08281"/>
<dbReference type="PaxDb" id="4932-YOL138C"/>
<dbReference type="PeptideAtlas" id="Q08281"/>
<dbReference type="EnsemblFungi" id="YOL138C_mRNA">
    <property type="protein sequence ID" value="YOL138C"/>
    <property type="gene ID" value="YOL138C"/>
</dbReference>
<dbReference type="GeneID" id="853982"/>
<dbReference type="KEGG" id="sce:YOL138C"/>
<dbReference type="AGR" id="SGD:S000005498"/>
<dbReference type="SGD" id="S000005498">
    <property type="gene designation" value="RTC1"/>
</dbReference>
<dbReference type="VEuPathDB" id="FungiDB:YOL138C"/>
<dbReference type="eggNOG" id="KOG0269">
    <property type="taxonomic scope" value="Eukaryota"/>
</dbReference>
<dbReference type="GeneTree" id="ENSGT00940000159396"/>
<dbReference type="HOGENOM" id="CLU_008512_0_0_1"/>
<dbReference type="InParanoid" id="Q08281"/>
<dbReference type="OMA" id="GRDGKCC"/>
<dbReference type="OrthoDB" id="60955at2759"/>
<dbReference type="BioCyc" id="YEAST:G3O-33531-MONOMER"/>
<dbReference type="BioGRID-ORCS" id="853982">
    <property type="hits" value="4 hits in 10 CRISPR screens"/>
</dbReference>
<dbReference type="CD-CODE" id="E03F929F">
    <property type="entry name" value="Stress granule"/>
</dbReference>
<dbReference type="PRO" id="PR:Q08281"/>
<dbReference type="Proteomes" id="UP000002311">
    <property type="component" value="Chromosome XV"/>
</dbReference>
<dbReference type="RNAct" id="Q08281">
    <property type="molecule type" value="protein"/>
</dbReference>
<dbReference type="GO" id="GO:0005829">
    <property type="term" value="C:cytosol"/>
    <property type="evidence" value="ECO:0007005"/>
    <property type="project" value="SGD"/>
</dbReference>
<dbReference type="GO" id="GO:0000324">
    <property type="term" value="C:fungal-type vacuole"/>
    <property type="evidence" value="ECO:0007005"/>
    <property type="project" value="SGD"/>
</dbReference>
<dbReference type="GO" id="GO:0061700">
    <property type="term" value="C:GATOR2 complex"/>
    <property type="evidence" value="ECO:0000318"/>
    <property type="project" value="GO_Central"/>
</dbReference>
<dbReference type="GO" id="GO:0035859">
    <property type="term" value="C:Seh1-associated complex"/>
    <property type="evidence" value="ECO:0000314"/>
    <property type="project" value="SGD"/>
</dbReference>
<dbReference type="GO" id="GO:0005774">
    <property type="term" value="C:vacuolar membrane"/>
    <property type="evidence" value="ECO:0000318"/>
    <property type="project" value="GO_Central"/>
</dbReference>
<dbReference type="GO" id="GO:0008270">
    <property type="term" value="F:zinc ion binding"/>
    <property type="evidence" value="ECO:0007669"/>
    <property type="project" value="UniProtKB-KW"/>
</dbReference>
<dbReference type="GO" id="GO:0016239">
    <property type="term" value="P:positive regulation of macroautophagy"/>
    <property type="evidence" value="ECO:0000318"/>
    <property type="project" value="GO_Central"/>
</dbReference>
<dbReference type="GO" id="GO:1904263">
    <property type="term" value="P:positive regulation of TORC1 signaling"/>
    <property type="evidence" value="ECO:0000316"/>
    <property type="project" value="SGD"/>
</dbReference>
<dbReference type="GO" id="GO:0015031">
    <property type="term" value="P:protein transport"/>
    <property type="evidence" value="ECO:0007669"/>
    <property type="project" value="UniProtKB-KW"/>
</dbReference>
<dbReference type="GO" id="GO:1903432">
    <property type="term" value="P:regulation of TORC1 signaling"/>
    <property type="evidence" value="ECO:0000314"/>
    <property type="project" value="ComplexPortal"/>
</dbReference>
<dbReference type="CDD" id="cd16488">
    <property type="entry name" value="mRING-H2-C3H3C2_Mio-like"/>
    <property type="match status" value="1"/>
</dbReference>
<dbReference type="FunFam" id="2.130.10.10:FF:001334">
    <property type="entry name" value="Restriction of telomere capping protein 1"/>
    <property type="match status" value="1"/>
</dbReference>
<dbReference type="Gene3D" id="2.130.10.10">
    <property type="entry name" value="YVTN repeat-like/Quinoprotein amine dehydrogenase"/>
    <property type="match status" value="1"/>
</dbReference>
<dbReference type="Gene3D" id="3.30.40.10">
    <property type="entry name" value="Zinc/RING finger domain, C3HC4 (zinc finger)"/>
    <property type="match status" value="1"/>
</dbReference>
<dbReference type="InterPro" id="IPR015943">
    <property type="entry name" value="WD40/YVTN_repeat-like_dom_sf"/>
</dbReference>
<dbReference type="InterPro" id="IPR019775">
    <property type="entry name" value="WD40_repeat_CS"/>
</dbReference>
<dbReference type="InterPro" id="IPR036322">
    <property type="entry name" value="WD40_repeat_dom_sf"/>
</dbReference>
<dbReference type="InterPro" id="IPR001680">
    <property type="entry name" value="WD40_rpt"/>
</dbReference>
<dbReference type="InterPro" id="IPR037590">
    <property type="entry name" value="WDR24"/>
</dbReference>
<dbReference type="InterPro" id="IPR049566">
    <property type="entry name" value="WDR59_RTC1-like_RING_Znf"/>
</dbReference>
<dbReference type="InterPro" id="IPR001841">
    <property type="entry name" value="Znf_RING"/>
</dbReference>
<dbReference type="InterPro" id="IPR013083">
    <property type="entry name" value="Znf_RING/FYVE/PHD"/>
</dbReference>
<dbReference type="PANTHER" id="PTHR46200">
    <property type="entry name" value="GATOR COMPLEX PROTEIN WDR24"/>
    <property type="match status" value="1"/>
</dbReference>
<dbReference type="PANTHER" id="PTHR46200:SF1">
    <property type="entry name" value="GATOR COMPLEX PROTEIN WDR24"/>
    <property type="match status" value="1"/>
</dbReference>
<dbReference type="Pfam" id="PF00400">
    <property type="entry name" value="WD40"/>
    <property type="match status" value="2"/>
</dbReference>
<dbReference type="Pfam" id="PF17120">
    <property type="entry name" value="zf-RING_16"/>
    <property type="match status" value="1"/>
</dbReference>
<dbReference type="SMART" id="SM00320">
    <property type="entry name" value="WD40"/>
    <property type="match status" value="2"/>
</dbReference>
<dbReference type="SUPFAM" id="SSF57850">
    <property type="entry name" value="RING/U-box"/>
    <property type="match status" value="1"/>
</dbReference>
<dbReference type="SUPFAM" id="SSF50978">
    <property type="entry name" value="WD40 repeat-like"/>
    <property type="match status" value="1"/>
</dbReference>
<dbReference type="PROSITE" id="PS00678">
    <property type="entry name" value="WD_REPEATS_1"/>
    <property type="match status" value="1"/>
</dbReference>
<dbReference type="PROSITE" id="PS50082">
    <property type="entry name" value="WD_REPEATS_2"/>
    <property type="match status" value="2"/>
</dbReference>
<dbReference type="PROSITE" id="PS50294">
    <property type="entry name" value="WD_REPEATS_REGION"/>
    <property type="match status" value="2"/>
</dbReference>
<dbReference type="PROSITE" id="PS50089">
    <property type="entry name" value="ZF_RING_2"/>
    <property type="match status" value="1"/>
</dbReference>
<evidence type="ECO:0000255" key="1">
    <source>
        <dbReference type="PROSITE-ProRule" id="PRU00175"/>
    </source>
</evidence>
<evidence type="ECO:0000256" key="2">
    <source>
        <dbReference type="SAM" id="MobiDB-lite"/>
    </source>
</evidence>
<evidence type="ECO:0000269" key="3">
    <source>
    </source>
</evidence>
<evidence type="ECO:0000269" key="4">
    <source>
    </source>
</evidence>
<evidence type="ECO:0000269" key="5">
    <source>
    </source>
</evidence>
<evidence type="ECO:0000269" key="6">
    <source>
    </source>
</evidence>
<evidence type="ECO:0000269" key="7">
    <source>
    </source>
</evidence>
<evidence type="ECO:0000269" key="8">
    <source>
    </source>
</evidence>
<evidence type="ECO:0000305" key="9"/>
<evidence type="ECO:0007744" key="10">
    <source>
    </source>
</evidence>
<evidence type="ECO:0007744" key="11">
    <source>
    </source>
</evidence>
<evidence type="ECO:0007744" key="12">
    <source>
    </source>
</evidence>
<evidence type="ECO:0007829" key="13">
    <source>
        <dbReference type="PDB" id="8ADL"/>
    </source>
</evidence>